<dbReference type="EC" id="2.8.1.13" evidence="1"/>
<dbReference type="EMBL" id="CP000850">
    <property type="protein sequence ID" value="ABV97015.1"/>
    <property type="molecule type" value="Genomic_DNA"/>
</dbReference>
<dbReference type="SMR" id="A8M5E1"/>
<dbReference type="STRING" id="391037.Sare_1107"/>
<dbReference type="KEGG" id="saq:Sare_1107"/>
<dbReference type="PATRIC" id="fig|391037.6.peg.1123"/>
<dbReference type="eggNOG" id="COG0482">
    <property type="taxonomic scope" value="Bacteria"/>
</dbReference>
<dbReference type="HOGENOM" id="CLU_035188_0_2_11"/>
<dbReference type="OrthoDB" id="9800696at2"/>
<dbReference type="GO" id="GO:0005737">
    <property type="term" value="C:cytoplasm"/>
    <property type="evidence" value="ECO:0007669"/>
    <property type="project" value="UniProtKB-SubCell"/>
</dbReference>
<dbReference type="GO" id="GO:0005524">
    <property type="term" value="F:ATP binding"/>
    <property type="evidence" value="ECO:0007669"/>
    <property type="project" value="UniProtKB-KW"/>
</dbReference>
<dbReference type="GO" id="GO:0000049">
    <property type="term" value="F:tRNA binding"/>
    <property type="evidence" value="ECO:0007669"/>
    <property type="project" value="UniProtKB-KW"/>
</dbReference>
<dbReference type="GO" id="GO:0103016">
    <property type="term" value="F:tRNA-uridine 2-sulfurtransferase activity"/>
    <property type="evidence" value="ECO:0007669"/>
    <property type="project" value="UniProtKB-EC"/>
</dbReference>
<dbReference type="GO" id="GO:0002143">
    <property type="term" value="P:tRNA wobble position uridine thiolation"/>
    <property type="evidence" value="ECO:0007669"/>
    <property type="project" value="TreeGrafter"/>
</dbReference>
<dbReference type="CDD" id="cd01998">
    <property type="entry name" value="MnmA_TRMU-like"/>
    <property type="match status" value="1"/>
</dbReference>
<dbReference type="FunFam" id="3.40.50.620:FF:000057">
    <property type="entry name" value="tRNA-specific 2-thiouridylase MnmA"/>
    <property type="match status" value="1"/>
</dbReference>
<dbReference type="Gene3D" id="2.30.30.280">
    <property type="entry name" value="Adenine nucleotide alpha hydrolases-like domains"/>
    <property type="match status" value="1"/>
</dbReference>
<dbReference type="Gene3D" id="3.40.50.620">
    <property type="entry name" value="HUPs"/>
    <property type="match status" value="1"/>
</dbReference>
<dbReference type="Gene3D" id="2.40.30.10">
    <property type="entry name" value="Translation factors"/>
    <property type="match status" value="1"/>
</dbReference>
<dbReference type="HAMAP" id="MF_00144">
    <property type="entry name" value="tRNA_thiouridyl_MnmA"/>
    <property type="match status" value="1"/>
</dbReference>
<dbReference type="InterPro" id="IPR004506">
    <property type="entry name" value="MnmA-like"/>
</dbReference>
<dbReference type="InterPro" id="IPR046885">
    <property type="entry name" value="MnmA-like_C"/>
</dbReference>
<dbReference type="InterPro" id="IPR046884">
    <property type="entry name" value="MnmA-like_central"/>
</dbReference>
<dbReference type="InterPro" id="IPR023382">
    <property type="entry name" value="MnmA-like_central_sf"/>
</dbReference>
<dbReference type="InterPro" id="IPR014729">
    <property type="entry name" value="Rossmann-like_a/b/a_fold"/>
</dbReference>
<dbReference type="NCBIfam" id="NF001138">
    <property type="entry name" value="PRK00143.1"/>
    <property type="match status" value="1"/>
</dbReference>
<dbReference type="NCBIfam" id="TIGR00420">
    <property type="entry name" value="trmU"/>
    <property type="match status" value="1"/>
</dbReference>
<dbReference type="PANTHER" id="PTHR11933:SF5">
    <property type="entry name" value="MITOCHONDRIAL TRNA-SPECIFIC 2-THIOURIDYLASE 1"/>
    <property type="match status" value="1"/>
</dbReference>
<dbReference type="PANTHER" id="PTHR11933">
    <property type="entry name" value="TRNA 5-METHYLAMINOMETHYL-2-THIOURIDYLATE -METHYLTRANSFERASE"/>
    <property type="match status" value="1"/>
</dbReference>
<dbReference type="Pfam" id="PF03054">
    <property type="entry name" value="tRNA_Me_trans"/>
    <property type="match status" value="1"/>
</dbReference>
<dbReference type="Pfam" id="PF20258">
    <property type="entry name" value="tRNA_Me_trans_C"/>
    <property type="match status" value="1"/>
</dbReference>
<dbReference type="Pfam" id="PF20259">
    <property type="entry name" value="tRNA_Me_trans_M"/>
    <property type="match status" value="1"/>
</dbReference>
<dbReference type="SUPFAM" id="SSF52402">
    <property type="entry name" value="Adenine nucleotide alpha hydrolases-like"/>
    <property type="match status" value="1"/>
</dbReference>
<evidence type="ECO:0000255" key="1">
    <source>
        <dbReference type="HAMAP-Rule" id="MF_00144"/>
    </source>
</evidence>
<name>MNMA_SALAI</name>
<accession>A8M5E1</accession>
<gene>
    <name evidence="1" type="primary">mnmA</name>
    <name type="ordered locus">Sare_1107</name>
</gene>
<sequence length="360" mass="37770">MVAVRVLAAMSGGVDSAVAAARAVAAGHDVTGVHLALARNPQTYRTGARGCCTLEDSRDARRAADVIGIPFYVWDMAERFQADVVDDFVAEYAAGRTPNPCLRCNEKIKFAAVLDRAVALGFDAVVTGHHARLGADGLLRRSVDLAKDQSYVLGVLTREQLGRSMFPLGDSTKTQVRAEATGRGLTVADKPDSHDICFVADGDTRGFLAERLGATPGDVVDSSTGAVVGRHTGAYAYTVGQRRGLHLDRPAPDGRPRYVLSITPKTNTVTVGPAEALAVSQVRAQRPVWTGGPRPADPIECEVQLRAHGDVVPATVAVTGDGLRAELHRPVRGVAAGQAIVAYRPDPGGDVVLGSATIAA</sequence>
<comment type="function">
    <text evidence="1">Catalyzes the 2-thiolation of uridine at the wobble position (U34) of tRNA, leading to the formation of s(2)U34.</text>
</comment>
<comment type="catalytic activity">
    <reaction evidence="1">
        <text>S-sulfanyl-L-cysteinyl-[protein] + uridine(34) in tRNA + AH2 + ATP = 2-thiouridine(34) in tRNA + L-cysteinyl-[protein] + A + AMP + diphosphate + H(+)</text>
        <dbReference type="Rhea" id="RHEA:47032"/>
        <dbReference type="Rhea" id="RHEA-COMP:10131"/>
        <dbReference type="Rhea" id="RHEA-COMP:11726"/>
        <dbReference type="Rhea" id="RHEA-COMP:11727"/>
        <dbReference type="Rhea" id="RHEA-COMP:11728"/>
        <dbReference type="ChEBI" id="CHEBI:13193"/>
        <dbReference type="ChEBI" id="CHEBI:15378"/>
        <dbReference type="ChEBI" id="CHEBI:17499"/>
        <dbReference type="ChEBI" id="CHEBI:29950"/>
        <dbReference type="ChEBI" id="CHEBI:30616"/>
        <dbReference type="ChEBI" id="CHEBI:33019"/>
        <dbReference type="ChEBI" id="CHEBI:61963"/>
        <dbReference type="ChEBI" id="CHEBI:65315"/>
        <dbReference type="ChEBI" id="CHEBI:87170"/>
        <dbReference type="ChEBI" id="CHEBI:456215"/>
        <dbReference type="EC" id="2.8.1.13"/>
    </reaction>
</comment>
<comment type="subcellular location">
    <subcellularLocation>
        <location evidence="1">Cytoplasm</location>
    </subcellularLocation>
</comment>
<comment type="similarity">
    <text evidence="1">Belongs to the MnmA/TRMU family.</text>
</comment>
<proteinExistence type="inferred from homology"/>
<reference key="1">
    <citation type="submission" date="2007-10" db="EMBL/GenBank/DDBJ databases">
        <title>Complete sequence of Salinispora arenicola CNS-205.</title>
        <authorList>
            <consortium name="US DOE Joint Genome Institute"/>
            <person name="Copeland A."/>
            <person name="Lucas S."/>
            <person name="Lapidus A."/>
            <person name="Barry K."/>
            <person name="Glavina del Rio T."/>
            <person name="Dalin E."/>
            <person name="Tice H."/>
            <person name="Pitluck S."/>
            <person name="Foster B."/>
            <person name="Schmutz J."/>
            <person name="Larimer F."/>
            <person name="Land M."/>
            <person name="Hauser L."/>
            <person name="Kyrpides N."/>
            <person name="Ivanova N."/>
            <person name="Jensen P.R."/>
            <person name="Moore B.S."/>
            <person name="Penn K."/>
            <person name="Jenkins C."/>
            <person name="Udwary D."/>
            <person name="Xiang L."/>
            <person name="Gontang E."/>
            <person name="Richardson P."/>
        </authorList>
    </citation>
    <scope>NUCLEOTIDE SEQUENCE [LARGE SCALE GENOMIC DNA]</scope>
    <source>
        <strain>CNS-205</strain>
    </source>
</reference>
<protein>
    <recommendedName>
        <fullName evidence="1">tRNA-specific 2-thiouridylase MnmA</fullName>
        <ecNumber evidence="1">2.8.1.13</ecNumber>
    </recommendedName>
</protein>
<keyword id="KW-0067">ATP-binding</keyword>
<keyword id="KW-0963">Cytoplasm</keyword>
<keyword id="KW-1015">Disulfide bond</keyword>
<keyword id="KW-0547">Nucleotide-binding</keyword>
<keyword id="KW-0694">RNA-binding</keyword>
<keyword id="KW-0808">Transferase</keyword>
<keyword id="KW-0819">tRNA processing</keyword>
<keyword id="KW-0820">tRNA-binding</keyword>
<organism>
    <name type="scientific">Salinispora arenicola (strain CNS-205)</name>
    <dbReference type="NCBI Taxonomy" id="391037"/>
    <lineage>
        <taxon>Bacteria</taxon>
        <taxon>Bacillati</taxon>
        <taxon>Actinomycetota</taxon>
        <taxon>Actinomycetes</taxon>
        <taxon>Micromonosporales</taxon>
        <taxon>Micromonosporaceae</taxon>
        <taxon>Salinispora</taxon>
    </lineage>
</organism>
<feature type="chain" id="PRO_0000349784" description="tRNA-specific 2-thiouridylase MnmA">
    <location>
        <begin position="1"/>
        <end position="360"/>
    </location>
</feature>
<feature type="region of interest" description="Interaction with tRNA" evidence="1">
    <location>
        <begin position="147"/>
        <end position="149"/>
    </location>
</feature>
<feature type="active site" description="Nucleophile" evidence="1">
    <location>
        <position position="104"/>
    </location>
</feature>
<feature type="active site" description="Cysteine persulfide intermediate" evidence="1">
    <location>
        <position position="197"/>
    </location>
</feature>
<feature type="binding site" evidence="1">
    <location>
        <begin position="9"/>
        <end position="16"/>
    </location>
    <ligand>
        <name>ATP</name>
        <dbReference type="ChEBI" id="CHEBI:30616"/>
    </ligand>
</feature>
<feature type="binding site" evidence="1">
    <location>
        <position position="35"/>
    </location>
    <ligand>
        <name>ATP</name>
        <dbReference type="ChEBI" id="CHEBI:30616"/>
    </ligand>
</feature>
<feature type="binding site" evidence="1">
    <location>
        <position position="128"/>
    </location>
    <ligand>
        <name>ATP</name>
        <dbReference type="ChEBI" id="CHEBI:30616"/>
    </ligand>
</feature>
<feature type="site" description="Interaction with tRNA" evidence="1">
    <location>
        <position position="129"/>
    </location>
</feature>
<feature type="site" description="Interaction with tRNA" evidence="1">
    <location>
        <position position="338"/>
    </location>
</feature>
<feature type="disulfide bond" description="Alternate" evidence="1">
    <location>
        <begin position="104"/>
        <end position="197"/>
    </location>
</feature>